<feature type="chain" id="PRO_0000282553" description="Protein FAM91A1">
    <location>
        <begin position="1"/>
        <end position="837"/>
    </location>
</feature>
<feature type="region of interest" description="Disordered" evidence="2">
    <location>
        <begin position="334"/>
        <end position="366"/>
    </location>
</feature>
<feature type="region of interest" description="Disordered" evidence="2">
    <location>
        <begin position="670"/>
        <end position="691"/>
    </location>
</feature>
<feature type="compositionally biased region" description="Polar residues" evidence="2">
    <location>
        <begin position="340"/>
        <end position="366"/>
    </location>
</feature>
<feature type="compositionally biased region" description="Basic and acidic residues" evidence="2">
    <location>
        <begin position="670"/>
        <end position="680"/>
    </location>
</feature>
<feature type="modified residue" description="Phosphoserine" evidence="1">
    <location>
        <position position="332"/>
    </location>
</feature>
<feature type="modified residue" description="Phosphoserine" evidence="1">
    <location>
        <position position="340"/>
    </location>
</feature>
<feature type="modified residue" description="Phosphoserine" evidence="1">
    <location>
        <position position="671"/>
    </location>
</feature>
<feature type="modified residue" description="Phosphoserine" evidence="1">
    <location>
        <position position="828"/>
    </location>
</feature>
<feature type="modified residue" description="Phosphoserine" evidence="5">
    <location>
        <position position="834"/>
    </location>
</feature>
<gene>
    <name type="primary">Fam91a1</name>
    <name type="synonym">D15Ertd621e</name>
    <name type="synonym">Kiaa0493</name>
</gene>
<reference key="1">
    <citation type="journal article" date="2003" name="DNA Res.">
        <title>Prediction of the coding sequences of mouse homologues of KIAA gene: II. The complete nucleotide sequences of 400 mouse KIAA-homologous cDNAs identified by screening of terminal sequences of cDNA clones randomly sampled from size-fractionated libraries.</title>
        <authorList>
            <person name="Okazaki N."/>
            <person name="Kikuno R."/>
            <person name="Ohara R."/>
            <person name="Inamoto S."/>
            <person name="Aizawa H."/>
            <person name="Yuasa S."/>
            <person name="Nakajima D."/>
            <person name="Nagase T."/>
            <person name="Ohara O."/>
            <person name="Koga H."/>
        </authorList>
    </citation>
    <scope>NUCLEOTIDE SEQUENCE [LARGE SCALE MRNA]</scope>
    <source>
        <tissue>Brain</tissue>
    </source>
</reference>
<reference key="2">
    <citation type="journal article" date="2005" name="Science">
        <title>The transcriptional landscape of the mammalian genome.</title>
        <authorList>
            <person name="Carninci P."/>
            <person name="Kasukawa T."/>
            <person name="Katayama S."/>
            <person name="Gough J."/>
            <person name="Frith M.C."/>
            <person name="Maeda N."/>
            <person name="Oyama R."/>
            <person name="Ravasi T."/>
            <person name="Lenhard B."/>
            <person name="Wells C."/>
            <person name="Kodzius R."/>
            <person name="Shimokawa K."/>
            <person name="Bajic V.B."/>
            <person name="Brenner S.E."/>
            <person name="Batalov S."/>
            <person name="Forrest A.R."/>
            <person name="Zavolan M."/>
            <person name="Davis M.J."/>
            <person name="Wilming L.G."/>
            <person name="Aidinis V."/>
            <person name="Allen J.E."/>
            <person name="Ambesi-Impiombato A."/>
            <person name="Apweiler R."/>
            <person name="Aturaliya R.N."/>
            <person name="Bailey T.L."/>
            <person name="Bansal M."/>
            <person name="Baxter L."/>
            <person name="Beisel K.W."/>
            <person name="Bersano T."/>
            <person name="Bono H."/>
            <person name="Chalk A.M."/>
            <person name="Chiu K.P."/>
            <person name="Choudhary V."/>
            <person name="Christoffels A."/>
            <person name="Clutterbuck D.R."/>
            <person name="Crowe M.L."/>
            <person name="Dalla E."/>
            <person name="Dalrymple B.P."/>
            <person name="de Bono B."/>
            <person name="Della Gatta G."/>
            <person name="di Bernardo D."/>
            <person name="Down T."/>
            <person name="Engstrom P."/>
            <person name="Fagiolini M."/>
            <person name="Faulkner G."/>
            <person name="Fletcher C.F."/>
            <person name="Fukushima T."/>
            <person name="Furuno M."/>
            <person name="Futaki S."/>
            <person name="Gariboldi M."/>
            <person name="Georgii-Hemming P."/>
            <person name="Gingeras T.R."/>
            <person name="Gojobori T."/>
            <person name="Green R.E."/>
            <person name="Gustincich S."/>
            <person name="Harbers M."/>
            <person name="Hayashi Y."/>
            <person name="Hensch T.K."/>
            <person name="Hirokawa N."/>
            <person name="Hill D."/>
            <person name="Huminiecki L."/>
            <person name="Iacono M."/>
            <person name="Ikeo K."/>
            <person name="Iwama A."/>
            <person name="Ishikawa T."/>
            <person name="Jakt M."/>
            <person name="Kanapin A."/>
            <person name="Katoh M."/>
            <person name="Kawasawa Y."/>
            <person name="Kelso J."/>
            <person name="Kitamura H."/>
            <person name="Kitano H."/>
            <person name="Kollias G."/>
            <person name="Krishnan S.P."/>
            <person name="Kruger A."/>
            <person name="Kummerfeld S.K."/>
            <person name="Kurochkin I.V."/>
            <person name="Lareau L.F."/>
            <person name="Lazarevic D."/>
            <person name="Lipovich L."/>
            <person name="Liu J."/>
            <person name="Liuni S."/>
            <person name="McWilliam S."/>
            <person name="Madan Babu M."/>
            <person name="Madera M."/>
            <person name="Marchionni L."/>
            <person name="Matsuda H."/>
            <person name="Matsuzawa S."/>
            <person name="Miki H."/>
            <person name="Mignone F."/>
            <person name="Miyake S."/>
            <person name="Morris K."/>
            <person name="Mottagui-Tabar S."/>
            <person name="Mulder N."/>
            <person name="Nakano N."/>
            <person name="Nakauchi H."/>
            <person name="Ng P."/>
            <person name="Nilsson R."/>
            <person name="Nishiguchi S."/>
            <person name="Nishikawa S."/>
            <person name="Nori F."/>
            <person name="Ohara O."/>
            <person name="Okazaki Y."/>
            <person name="Orlando V."/>
            <person name="Pang K.C."/>
            <person name="Pavan W.J."/>
            <person name="Pavesi G."/>
            <person name="Pesole G."/>
            <person name="Petrovsky N."/>
            <person name="Piazza S."/>
            <person name="Reed J."/>
            <person name="Reid J.F."/>
            <person name="Ring B.Z."/>
            <person name="Ringwald M."/>
            <person name="Rost B."/>
            <person name="Ruan Y."/>
            <person name="Salzberg S.L."/>
            <person name="Sandelin A."/>
            <person name="Schneider C."/>
            <person name="Schoenbach C."/>
            <person name="Sekiguchi K."/>
            <person name="Semple C.A."/>
            <person name="Seno S."/>
            <person name="Sessa L."/>
            <person name="Sheng Y."/>
            <person name="Shibata Y."/>
            <person name="Shimada H."/>
            <person name="Shimada K."/>
            <person name="Silva D."/>
            <person name="Sinclair B."/>
            <person name="Sperling S."/>
            <person name="Stupka E."/>
            <person name="Sugiura K."/>
            <person name="Sultana R."/>
            <person name="Takenaka Y."/>
            <person name="Taki K."/>
            <person name="Tammoja K."/>
            <person name="Tan S.L."/>
            <person name="Tang S."/>
            <person name="Taylor M.S."/>
            <person name="Tegner J."/>
            <person name="Teichmann S.A."/>
            <person name="Ueda H.R."/>
            <person name="van Nimwegen E."/>
            <person name="Verardo R."/>
            <person name="Wei C.L."/>
            <person name="Yagi K."/>
            <person name="Yamanishi H."/>
            <person name="Zabarovsky E."/>
            <person name="Zhu S."/>
            <person name="Zimmer A."/>
            <person name="Hide W."/>
            <person name="Bult C."/>
            <person name="Grimmond S.M."/>
            <person name="Teasdale R.D."/>
            <person name="Liu E.T."/>
            <person name="Brusic V."/>
            <person name="Quackenbush J."/>
            <person name="Wahlestedt C."/>
            <person name="Mattick J.S."/>
            <person name="Hume D.A."/>
            <person name="Kai C."/>
            <person name="Sasaki D."/>
            <person name="Tomaru Y."/>
            <person name="Fukuda S."/>
            <person name="Kanamori-Katayama M."/>
            <person name="Suzuki M."/>
            <person name="Aoki J."/>
            <person name="Arakawa T."/>
            <person name="Iida J."/>
            <person name="Imamura K."/>
            <person name="Itoh M."/>
            <person name="Kato T."/>
            <person name="Kawaji H."/>
            <person name="Kawagashira N."/>
            <person name="Kawashima T."/>
            <person name="Kojima M."/>
            <person name="Kondo S."/>
            <person name="Konno H."/>
            <person name="Nakano K."/>
            <person name="Ninomiya N."/>
            <person name="Nishio T."/>
            <person name="Okada M."/>
            <person name="Plessy C."/>
            <person name="Shibata K."/>
            <person name="Shiraki T."/>
            <person name="Suzuki S."/>
            <person name="Tagami M."/>
            <person name="Waki K."/>
            <person name="Watahiki A."/>
            <person name="Okamura-Oho Y."/>
            <person name="Suzuki H."/>
            <person name="Kawai J."/>
            <person name="Hayashizaki Y."/>
        </authorList>
    </citation>
    <scope>NUCLEOTIDE SEQUENCE [LARGE SCALE MRNA]</scope>
    <source>
        <strain>C57BL/6J</strain>
        <tissue>Cerebellum</tissue>
    </source>
</reference>
<reference key="3">
    <citation type="journal article" date="2004" name="Genome Res.">
        <title>The status, quality, and expansion of the NIH full-length cDNA project: the Mammalian Gene Collection (MGC).</title>
        <authorList>
            <consortium name="The MGC Project Team"/>
        </authorList>
    </citation>
    <scope>NUCLEOTIDE SEQUENCE [LARGE SCALE MRNA]</scope>
    <source>
        <strain>C57BL/6J</strain>
        <tissue>Brain</tissue>
        <tissue>Eye</tissue>
    </source>
</reference>
<reference key="4">
    <citation type="journal article" date="2010" name="Cell">
        <title>A tissue-specific atlas of mouse protein phosphorylation and expression.</title>
        <authorList>
            <person name="Huttlin E.L."/>
            <person name="Jedrychowski M.P."/>
            <person name="Elias J.E."/>
            <person name="Goswami T."/>
            <person name="Rad R."/>
            <person name="Beausoleil S.A."/>
            <person name="Villen J."/>
            <person name="Haas W."/>
            <person name="Sowa M.E."/>
            <person name="Gygi S.P."/>
        </authorList>
    </citation>
    <scope>PHOSPHORYLATION [LARGE SCALE ANALYSIS] AT SER-834</scope>
    <scope>IDENTIFICATION BY MASS SPECTROMETRY [LARGE SCALE ANALYSIS]</scope>
    <source>
        <tissue>Brain</tissue>
        <tissue>Brown adipose tissue</tissue>
        <tissue>Kidney</tissue>
        <tissue>Liver</tissue>
        <tissue>Lung</tissue>
        <tissue>Pancreas</tissue>
        <tissue>Spleen</tissue>
        <tissue>Testis</tissue>
    </source>
</reference>
<reference key="5">
    <citation type="journal article" date="2017" name="Nat. Cell Biol.">
        <title>TBC1D23 is a bridging factor for endosomal vesicle capture by golgins at the trans-Golgi.</title>
        <authorList>
            <person name="Shin J.J.H."/>
            <person name="Gillingham A.K."/>
            <person name="Begum F."/>
            <person name="Chadwick J."/>
            <person name="Munro S."/>
        </authorList>
    </citation>
    <scope>INTERACTION WITH TBC1D23</scope>
</reference>
<accession>Q3UVG3</accession>
<accession>Q80TZ0</accession>
<accession>Q8K077</accession>
<proteinExistence type="evidence at protein level"/>
<sequence>MNIDVEFHIRHNYPWSKLPTNVKQSLGNSQREYEKQVVLYSIRNQLRYRNNLVKHVKKDERKYYEELLKYSRDHLMLYPYHLSDIMVKGLRITPFSYYAGIMEDIMNSEKSYDSLPNFTAADCLRLLGIGRNQYIDLMNQCRSSKKFFRRKTARDLLPMKPVEIAIEAWWVVQAGYITEDDIKICTFPEKGAIDKIIDSGPQLSGSLDYNVVHSLYNKGFIYLDVPISDDSCIAVPPLEGFVMNRVQGDYFETLLYKIFVSIDEHTNVAELANVLEIDLSLVKNAVSMYCRLGFAHKKGQVINLDQLHSSWKNVPSVNRLKSTLDPQKMLLSWDGGESRSPVQEASSATDTDTNSQEDPADTASVSSLSLSTGYTKRIAFLFDSTLTAFLMMGNLSPNLKSHAVTMFEVGKLSDESLDSFLIELEKVQSTGEGEAQRYFDHALTLRNTILFLRHNKDLVAQTSQPDQPNYGFPLDLLRCESLLGLDPATCSRVLNKNYTLLVSMAPLTNEIRPVSSCTPQHIGPAIPEVSSVWFKLYIYHVTGQGPPSLLLSKGTRLRKLPDIFQGYDRLLITSWGHDPGVVPASNVLTMLNDALTHSAVLIQGHGLHGVGETVHIPFPFDEAELQGEFTRASMGVHKALQILRSRVDLQHFCGYVTMLNASSQLASRKLSEASDERGEPDLASSSDVNGSTESFEMVIEEASTDLATKPNSGATAEADWVPLELCFGIPLFSSELNRKVCQKIATHGLCRKESLQSLLHSSRKLSLQVLNFVHSFQEGAATLDLHAEPGFSSVLSQSPCADMGVPLPAKNLMFKDGVLSEWSGRSPSSLLIASLHL</sequence>
<organism>
    <name type="scientific">Mus musculus</name>
    <name type="common">Mouse</name>
    <dbReference type="NCBI Taxonomy" id="10090"/>
    <lineage>
        <taxon>Eukaryota</taxon>
        <taxon>Metazoa</taxon>
        <taxon>Chordata</taxon>
        <taxon>Craniata</taxon>
        <taxon>Vertebrata</taxon>
        <taxon>Euteleostomi</taxon>
        <taxon>Mammalia</taxon>
        <taxon>Eutheria</taxon>
        <taxon>Euarchontoglires</taxon>
        <taxon>Glires</taxon>
        <taxon>Rodentia</taxon>
        <taxon>Myomorpha</taxon>
        <taxon>Muroidea</taxon>
        <taxon>Muridae</taxon>
        <taxon>Murinae</taxon>
        <taxon>Mus</taxon>
        <taxon>Mus</taxon>
    </lineage>
</organism>
<comment type="function">
    <text evidence="1">As component of the WDR11 complex acts together with TBC1D23 to facilitate the golgin-mediated capture of vesicles generated using AP-1.</text>
</comment>
<comment type="subunit">
    <text evidence="1 3">Component of the complex WDR11 composed of C17orf75, FAM91A1 and WDR11; FAM91A1 and WDR11 are required for proper location of the complex (By similarity). Interacts with golgins GOLGA1 and GOLGA4 and with TBC1D23; interaction with golgins may be mediated by TBC1D23 and interaction with TBC1D23 recruits TBC1D23 to AP-1-derived vesicles (PubMed:29084197).</text>
</comment>
<comment type="subcellular location">
    <subcellularLocation>
        <location evidence="1">Golgi apparatus</location>
        <location evidence="1">trans-Golgi network</location>
    </subcellularLocation>
    <subcellularLocation>
        <location evidence="1">Cytoplasmic vesicle</location>
    </subcellularLocation>
    <text evidence="1">Recruitment to the TGN requires the presence of GOLGA1, GOLGA4 and TBC1D23.</text>
</comment>
<comment type="similarity">
    <text evidence="4">Belongs to the FAM91 family.</text>
</comment>
<comment type="sequence caution" evidence="4">
    <conflict type="erroneous initiation">
        <sequence resource="EMBL-CDS" id="AAH33609"/>
    </conflict>
    <text>Truncated N-terminus.</text>
</comment>
<comment type="sequence caution" evidence="4">
    <conflict type="erroneous initiation">
        <sequence resource="EMBL-CDS" id="BAC65579"/>
    </conflict>
    <text>Extended N-terminus.</text>
</comment>
<evidence type="ECO:0000250" key="1">
    <source>
        <dbReference type="UniProtKB" id="Q658Y4"/>
    </source>
</evidence>
<evidence type="ECO:0000256" key="2">
    <source>
        <dbReference type="SAM" id="MobiDB-lite"/>
    </source>
</evidence>
<evidence type="ECO:0000269" key="3">
    <source>
    </source>
</evidence>
<evidence type="ECO:0000305" key="4"/>
<evidence type="ECO:0007744" key="5">
    <source>
    </source>
</evidence>
<name>F91A1_MOUSE</name>
<dbReference type="EMBL" id="AK122297">
    <property type="protein sequence ID" value="BAC65579.1"/>
    <property type="status" value="ALT_INIT"/>
    <property type="molecule type" value="mRNA"/>
</dbReference>
<dbReference type="EMBL" id="AK137324">
    <property type="protein sequence ID" value="BAE23306.1"/>
    <property type="molecule type" value="mRNA"/>
</dbReference>
<dbReference type="EMBL" id="BC033609">
    <property type="protein sequence ID" value="AAH33609.1"/>
    <property type="status" value="ALT_INIT"/>
    <property type="molecule type" value="mRNA"/>
</dbReference>
<dbReference type="EMBL" id="BC070426">
    <property type="protein sequence ID" value="AAH70426.1"/>
    <property type="molecule type" value="mRNA"/>
</dbReference>
<dbReference type="CCDS" id="CCDS37080.1"/>
<dbReference type="RefSeq" id="NP_666071.2">
    <property type="nucleotide sequence ID" value="NM_145959.4"/>
</dbReference>
<dbReference type="SMR" id="Q3UVG3"/>
<dbReference type="BioGRID" id="229196">
    <property type="interactions" value="2"/>
</dbReference>
<dbReference type="FunCoup" id="Q3UVG3">
    <property type="interactions" value="3955"/>
</dbReference>
<dbReference type="STRING" id="10090.ENSMUSP00000036524"/>
<dbReference type="GlyGen" id="Q3UVG3">
    <property type="glycosylation" value="1 site, 1 O-linked glycan (1 site)"/>
</dbReference>
<dbReference type="iPTMnet" id="Q3UVG3"/>
<dbReference type="PhosphoSitePlus" id="Q3UVG3"/>
<dbReference type="jPOST" id="Q3UVG3"/>
<dbReference type="PaxDb" id="10090-ENSMUSP00000036524"/>
<dbReference type="ProteomicsDB" id="277023"/>
<dbReference type="Pumba" id="Q3UVG3"/>
<dbReference type="Antibodypedia" id="27033">
    <property type="antibodies" value="119 antibodies from 17 providers"/>
</dbReference>
<dbReference type="DNASU" id="210998"/>
<dbReference type="Ensembl" id="ENSMUST00000037270.5">
    <property type="protein sequence ID" value="ENSMUSP00000036524.4"/>
    <property type="gene ID" value="ENSMUSG00000037119.5"/>
</dbReference>
<dbReference type="GeneID" id="210998"/>
<dbReference type="KEGG" id="mmu:210998"/>
<dbReference type="UCSC" id="uc007vtn.2">
    <property type="organism name" value="mouse"/>
</dbReference>
<dbReference type="AGR" id="MGI:1277178"/>
<dbReference type="CTD" id="157769"/>
<dbReference type="MGI" id="MGI:1277178">
    <property type="gene designation" value="Fam91a1"/>
</dbReference>
<dbReference type="VEuPathDB" id="HostDB:ENSMUSG00000037119"/>
<dbReference type="eggNOG" id="KOG3707">
    <property type="taxonomic scope" value="Eukaryota"/>
</dbReference>
<dbReference type="GeneTree" id="ENSGT00390000009543"/>
<dbReference type="HOGENOM" id="CLU_010656_0_0_1"/>
<dbReference type="InParanoid" id="Q3UVG3"/>
<dbReference type="OMA" id="HYESFPF"/>
<dbReference type="OrthoDB" id="275996at2759"/>
<dbReference type="PhylomeDB" id="Q3UVG3"/>
<dbReference type="TreeFam" id="TF314641"/>
<dbReference type="Reactome" id="R-MMU-9013407">
    <property type="pathway name" value="RHOH GTPase cycle"/>
</dbReference>
<dbReference type="BioGRID-ORCS" id="210998">
    <property type="hits" value="4 hits in 77 CRISPR screens"/>
</dbReference>
<dbReference type="ChiTaRS" id="Fam91a1">
    <property type="organism name" value="mouse"/>
</dbReference>
<dbReference type="PRO" id="PR:Q3UVG3"/>
<dbReference type="Proteomes" id="UP000000589">
    <property type="component" value="Chromosome 15"/>
</dbReference>
<dbReference type="RNAct" id="Q3UVG3">
    <property type="molecule type" value="protein"/>
</dbReference>
<dbReference type="Bgee" id="ENSMUSG00000037119">
    <property type="expression patterns" value="Expressed in postcranial axial skeleton and 105 other cell types or tissues"/>
</dbReference>
<dbReference type="ExpressionAtlas" id="Q3UVG3">
    <property type="expression patterns" value="baseline and differential"/>
</dbReference>
<dbReference type="GO" id="GO:0031410">
    <property type="term" value="C:cytoplasmic vesicle"/>
    <property type="evidence" value="ECO:0000250"/>
    <property type="project" value="UniProtKB"/>
</dbReference>
<dbReference type="GO" id="GO:0005802">
    <property type="term" value="C:trans-Golgi network"/>
    <property type="evidence" value="ECO:0000250"/>
    <property type="project" value="UniProtKB"/>
</dbReference>
<dbReference type="GO" id="GO:0006886">
    <property type="term" value="P:intracellular protein transport"/>
    <property type="evidence" value="ECO:0000250"/>
    <property type="project" value="UniProtKB"/>
</dbReference>
<dbReference type="GO" id="GO:0099041">
    <property type="term" value="P:vesicle tethering to Golgi"/>
    <property type="evidence" value="ECO:0007669"/>
    <property type="project" value="Ensembl"/>
</dbReference>
<dbReference type="InterPro" id="IPR039199">
    <property type="entry name" value="FAM91"/>
</dbReference>
<dbReference type="InterPro" id="IPR028097">
    <property type="entry name" value="FAM91_C_dom"/>
</dbReference>
<dbReference type="InterPro" id="IPR028091">
    <property type="entry name" value="FAM91_N_dom"/>
</dbReference>
<dbReference type="PANTHER" id="PTHR28441">
    <property type="entry name" value="PROTEIN FAM91A1"/>
    <property type="match status" value="1"/>
</dbReference>
<dbReference type="PANTHER" id="PTHR28441:SF2">
    <property type="entry name" value="PROTEIN FAM91A1"/>
    <property type="match status" value="1"/>
</dbReference>
<dbReference type="Pfam" id="PF14648">
    <property type="entry name" value="FAM91_C"/>
    <property type="match status" value="1"/>
</dbReference>
<dbReference type="Pfam" id="PF14647">
    <property type="entry name" value="FAM91_N"/>
    <property type="match status" value="1"/>
</dbReference>
<protein>
    <recommendedName>
        <fullName>Protein FAM91A1</fullName>
    </recommendedName>
</protein>
<keyword id="KW-0968">Cytoplasmic vesicle</keyword>
<keyword id="KW-0333">Golgi apparatus</keyword>
<keyword id="KW-0597">Phosphoprotein</keyword>
<keyword id="KW-1185">Reference proteome</keyword>